<feature type="chain" id="PRO_0000269272" description="Large ribosomal subunit protein bL21">
    <location>
        <begin position="1"/>
        <end position="130"/>
    </location>
</feature>
<comment type="function">
    <text evidence="1">This protein binds to 23S rRNA in the presence of protein L20.</text>
</comment>
<comment type="subunit">
    <text evidence="1">Part of the 50S ribosomal subunit. Contacts protein L20.</text>
</comment>
<comment type="similarity">
    <text evidence="1">Belongs to the bacterial ribosomal protein bL21 family.</text>
</comment>
<reference key="1">
    <citation type="journal article" date="2014" name="Stand. Genomic Sci.">
        <title>Complete genome sequence of Anabaena variabilis ATCC 29413.</title>
        <authorList>
            <person name="Thiel T."/>
            <person name="Pratte B.S."/>
            <person name="Zhong J."/>
            <person name="Goodwin L."/>
            <person name="Copeland A."/>
            <person name="Lucas S."/>
            <person name="Han C."/>
            <person name="Pitluck S."/>
            <person name="Land M.L."/>
            <person name="Kyrpides N.C."/>
            <person name="Woyke T."/>
        </authorList>
    </citation>
    <scope>NUCLEOTIDE SEQUENCE [LARGE SCALE GENOMIC DNA]</scope>
    <source>
        <strain>ATCC 29413 / PCC 7937</strain>
    </source>
</reference>
<organism>
    <name type="scientific">Trichormus variabilis (strain ATCC 29413 / PCC 7937)</name>
    <name type="common">Anabaena variabilis</name>
    <dbReference type="NCBI Taxonomy" id="240292"/>
    <lineage>
        <taxon>Bacteria</taxon>
        <taxon>Bacillati</taxon>
        <taxon>Cyanobacteriota</taxon>
        <taxon>Cyanophyceae</taxon>
        <taxon>Nostocales</taxon>
        <taxon>Nostocaceae</taxon>
        <taxon>Trichormus</taxon>
    </lineage>
</organism>
<dbReference type="EMBL" id="CP000117">
    <property type="protein sequence ID" value="ABA21139.1"/>
    <property type="molecule type" value="Genomic_DNA"/>
</dbReference>
<dbReference type="SMR" id="Q3MCZ7"/>
<dbReference type="STRING" id="240292.Ava_1516"/>
<dbReference type="KEGG" id="ava:Ava_1516"/>
<dbReference type="eggNOG" id="COG0261">
    <property type="taxonomic scope" value="Bacteria"/>
</dbReference>
<dbReference type="HOGENOM" id="CLU_061463_1_2_3"/>
<dbReference type="Proteomes" id="UP000002533">
    <property type="component" value="Chromosome"/>
</dbReference>
<dbReference type="GO" id="GO:0005737">
    <property type="term" value="C:cytoplasm"/>
    <property type="evidence" value="ECO:0007669"/>
    <property type="project" value="UniProtKB-ARBA"/>
</dbReference>
<dbReference type="GO" id="GO:1990904">
    <property type="term" value="C:ribonucleoprotein complex"/>
    <property type="evidence" value="ECO:0007669"/>
    <property type="project" value="UniProtKB-KW"/>
</dbReference>
<dbReference type="GO" id="GO:0005840">
    <property type="term" value="C:ribosome"/>
    <property type="evidence" value="ECO:0007669"/>
    <property type="project" value="UniProtKB-KW"/>
</dbReference>
<dbReference type="GO" id="GO:0019843">
    <property type="term" value="F:rRNA binding"/>
    <property type="evidence" value="ECO:0007669"/>
    <property type="project" value="UniProtKB-UniRule"/>
</dbReference>
<dbReference type="GO" id="GO:0003735">
    <property type="term" value="F:structural constituent of ribosome"/>
    <property type="evidence" value="ECO:0007669"/>
    <property type="project" value="InterPro"/>
</dbReference>
<dbReference type="GO" id="GO:0006412">
    <property type="term" value="P:translation"/>
    <property type="evidence" value="ECO:0007669"/>
    <property type="project" value="UniProtKB-UniRule"/>
</dbReference>
<dbReference type="HAMAP" id="MF_01363">
    <property type="entry name" value="Ribosomal_bL21"/>
    <property type="match status" value="1"/>
</dbReference>
<dbReference type="InterPro" id="IPR028909">
    <property type="entry name" value="bL21-like"/>
</dbReference>
<dbReference type="InterPro" id="IPR036164">
    <property type="entry name" value="bL21-like_sf"/>
</dbReference>
<dbReference type="InterPro" id="IPR001787">
    <property type="entry name" value="Ribosomal_bL21"/>
</dbReference>
<dbReference type="InterPro" id="IPR018258">
    <property type="entry name" value="Ribosomal_bL21_CS"/>
</dbReference>
<dbReference type="NCBIfam" id="TIGR00061">
    <property type="entry name" value="L21"/>
    <property type="match status" value="1"/>
</dbReference>
<dbReference type="PANTHER" id="PTHR21349">
    <property type="entry name" value="50S RIBOSOMAL PROTEIN L21"/>
    <property type="match status" value="1"/>
</dbReference>
<dbReference type="PANTHER" id="PTHR21349:SF0">
    <property type="entry name" value="LARGE RIBOSOMAL SUBUNIT PROTEIN BL21M"/>
    <property type="match status" value="1"/>
</dbReference>
<dbReference type="Pfam" id="PF00829">
    <property type="entry name" value="Ribosomal_L21p"/>
    <property type="match status" value="1"/>
</dbReference>
<dbReference type="SUPFAM" id="SSF141091">
    <property type="entry name" value="L21p-like"/>
    <property type="match status" value="1"/>
</dbReference>
<dbReference type="PROSITE" id="PS01169">
    <property type="entry name" value="RIBOSOMAL_L21"/>
    <property type="match status" value="1"/>
</dbReference>
<sequence>MAYAIIETGGKQVRVEPGRFYDIELLSAEPDEKVTIESVLLVQNDGEVTIGQPLVAGATVQGTVLRHLRGRKVLVYKMKPKKKTRKKRGHRQEITRLLIDSITFNGTVLTAPTASAETADATPDTETAAE</sequence>
<gene>
    <name evidence="1" type="primary">rplU</name>
    <name evidence="1" type="synonym">rpl21</name>
    <name type="ordered locus">Ava_1516</name>
</gene>
<name>RL21_TRIV2</name>
<proteinExistence type="inferred from homology"/>
<evidence type="ECO:0000255" key="1">
    <source>
        <dbReference type="HAMAP-Rule" id="MF_01363"/>
    </source>
</evidence>
<evidence type="ECO:0000305" key="2"/>
<accession>Q3MCZ7</accession>
<protein>
    <recommendedName>
        <fullName evidence="1">Large ribosomal subunit protein bL21</fullName>
    </recommendedName>
    <alternativeName>
        <fullName evidence="2">50S ribosomal protein L21</fullName>
    </alternativeName>
</protein>
<keyword id="KW-0687">Ribonucleoprotein</keyword>
<keyword id="KW-0689">Ribosomal protein</keyword>
<keyword id="KW-0694">RNA-binding</keyword>
<keyword id="KW-0699">rRNA-binding</keyword>